<evidence type="ECO:0000255" key="1">
    <source>
        <dbReference type="HAMAP-Rule" id="MF_00548"/>
    </source>
</evidence>
<evidence type="ECO:0000305" key="2"/>
<keyword id="KW-0997">Cell inner membrane</keyword>
<keyword id="KW-1003">Cell membrane</keyword>
<keyword id="KW-0406">Ion transport</keyword>
<keyword id="KW-0408">Iron</keyword>
<keyword id="KW-0472">Membrane</keyword>
<keyword id="KW-0479">Metal-binding</keyword>
<keyword id="KW-1185">Reference proteome</keyword>
<keyword id="KW-0812">Transmembrane</keyword>
<keyword id="KW-1133">Transmembrane helix</keyword>
<keyword id="KW-0813">Transport</keyword>
<keyword id="KW-0862">Zinc</keyword>
<keyword id="KW-0864">Zinc transport</keyword>
<protein>
    <recommendedName>
        <fullName evidence="1">Zinc transporter ZupT</fullName>
    </recommendedName>
</protein>
<comment type="function">
    <text evidence="1">Mediates zinc uptake. May also transport other divalent cations.</text>
</comment>
<comment type="catalytic activity">
    <reaction evidence="1">
        <text>Zn(2+)(in) = Zn(2+)(out)</text>
        <dbReference type="Rhea" id="RHEA:29351"/>
        <dbReference type="ChEBI" id="CHEBI:29105"/>
    </reaction>
</comment>
<comment type="subcellular location">
    <subcellularLocation>
        <location evidence="1">Cell inner membrane</location>
        <topology evidence="1 2">Multi-pass membrane protein</topology>
    </subcellularLocation>
</comment>
<comment type="similarity">
    <text evidence="1 2">Belongs to the ZIP transporter (TC 2.A.5) family. ZupT subfamily.</text>
</comment>
<comment type="sequence caution" evidence="2">
    <conflict type="erroneous initiation">
        <sequence resource="EMBL-CDS" id="AAN82233"/>
    </conflict>
</comment>
<proteinExistence type="inferred from homology"/>
<feature type="chain" id="PRO_0000207273" description="Zinc transporter ZupT">
    <location>
        <begin position="1"/>
        <end position="257"/>
    </location>
</feature>
<feature type="transmembrane region" description="Helical" evidence="1">
    <location>
        <begin position="5"/>
        <end position="25"/>
    </location>
</feature>
<feature type="transmembrane region" description="Helical" evidence="1">
    <location>
        <begin position="32"/>
        <end position="52"/>
    </location>
</feature>
<feature type="transmembrane region" description="Helical" evidence="1">
    <location>
        <begin position="61"/>
        <end position="81"/>
    </location>
</feature>
<feature type="transmembrane region" description="Helical" evidence="1">
    <location>
        <begin position="137"/>
        <end position="157"/>
    </location>
</feature>
<feature type="transmembrane region" description="Helical" evidence="1">
    <location>
        <begin position="171"/>
        <end position="191"/>
    </location>
</feature>
<feature type="transmembrane region" description="Helical" evidence="1">
    <location>
        <begin position="195"/>
        <end position="215"/>
    </location>
</feature>
<feature type="transmembrane region" description="Helical" evidence="1">
    <location>
        <begin position="236"/>
        <end position="256"/>
    </location>
</feature>
<feature type="binding site" description="M2 metal binding site" evidence="1">
    <location>
        <position position="120"/>
    </location>
    <ligand>
        <name>Fe(2+)</name>
        <dbReference type="ChEBI" id="CHEBI:29033"/>
    </ligand>
</feature>
<feature type="binding site" description="M2 metal binding site" evidence="1">
    <location>
        <position position="123"/>
    </location>
    <ligand>
        <name>Fe(2+)</name>
        <dbReference type="ChEBI" id="CHEBI:29033"/>
    </ligand>
</feature>
<feature type="binding site" description="M1 metal binding site" evidence="1">
    <location>
        <position position="123"/>
    </location>
    <ligand>
        <name>Zn(2+)</name>
        <dbReference type="ChEBI" id="CHEBI:29105"/>
    </ligand>
</feature>
<feature type="binding site" description="M1 metal binding site" evidence="1">
    <location>
        <position position="148"/>
    </location>
    <ligand>
        <name>Zn(2+)</name>
        <dbReference type="ChEBI" id="CHEBI:29105"/>
    </ligand>
</feature>
<feature type="binding site" description="M2 metal binding site" evidence="1">
    <location>
        <position position="149"/>
    </location>
    <ligand>
        <name>Fe(2+)</name>
        <dbReference type="ChEBI" id="CHEBI:29033"/>
    </ligand>
</feature>
<feature type="binding site" description="M2 metal binding site" evidence="1">
    <location>
        <position position="152"/>
    </location>
    <ligand>
        <name>Fe(2+)</name>
        <dbReference type="ChEBI" id="CHEBI:29033"/>
    </ligand>
</feature>
<feature type="binding site" description="M1 metal binding site" evidence="1">
    <location>
        <position position="152"/>
    </location>
    <ligand>
        <name>Zn(2+)</name>
        <dbReference type="ChEBI" id="CHEBI:29105"/>
    </ligand>
</feature>
<feature type="binding site" description="M2 metal binding site" evidence="1">
    <location>
        <position position="181"/>
    </location>
    <ligand>
        <name>Fe(2+)</name>
        <dbReference type="ChEBI" id="CHEBI:29033"/>
    </ligand>
</feature>
<dbReference type="EMBL" id="AE014075">
    <property type="protein sequence ID" value="AAN82233.1"/>
    <property type="status" value="ALT_INIT"/>
    <property type="molecule type" value="Genomic_DNA"/>
</dbReference>
<dbReference type="RefSeq" id="WP_001295627.1">
    <property type="nucleotide sequence ID" value="NZ_CP051263.1"/>
</dbReference>
<dbReference type="SMR" id="P0A8H4"/>
<dbReference type="STRING" id="199310.c3789"/>
<dbReference type="GeneID" id="93778954"/>
<dbReference type="KEGG" id="ecc:c3789"/>
<dbReference type="eggNOG" id="COG0428">
    <property type="taxonomic scope" value="Bacteria"/>
</dbReference>
<dbReference type="HOGENOM" id="CLU_015114_1_3_6"/>
<dbReference type="Proteomes" id="UP000001410">
    <property type="component" value="Chromosome"/>
</dbReference>
<dbReference type="GO" id="GO:0005886">
    <property type="term" value="C:plasma membrane"/>
    <property type="evidence" value="ECO:0007669"/>
    <property type="project" value="UniProtKB-SubCell"/>
</dbReference>
<dbReference type="GO" id="GO:0046872">
    <property type="term" value="F:metal ion binding"/>
    <property type="evidence" value="ECO:0007669"/>
    <property type="project" value="UniProtKB-KW"/>
</dbReference>
<dbReference type="GO" id="GO:0005385">
    <property type="term" value="F:zinc ion transmembrane transporter activity"/>
    <property type="evidence" value="ECO:0007669"/>
    <property type="project" value="UniProtKB-UniRule"/>
</dbReference>
<dbReference type="HAMAP" id="MF_00548">
    <property type="entry name" value="ZupT"/>
    <property type="match status" value="1"/>
</dbReference>
<dbReference type="InterPro" id="IPR003689">
    <property type="entry name" value="ZIP"/>
</dbReference>
<dbReference type="InterPro" id="IPR023498">
    <property type="entry name" value="Zn_transptr_ZupT"/>
</dbReference>
<dbReference type="NCBIfam" id="NF003243">
    <property type="entry name" value="PRK04201.1"/>
    <property type="match status" value="1"/>
</dbReference>
<dbReference type="PANTHER" id="PTHR11040:SF205">
    <property type="entry name" value="ZINC TRANSPORTER ZUPT"/>
    <property type="match status" value="1"/>
</dbReference>
<dbReference type="PANTHER" id="PTHR11040">
    <property type="entry name" value="ZINC/IRON TRANSPORTER"/>
    <property type="match status" value="1"/>
</dbReference>
<dbReference type="Pfam" id="PF02535">
    <property type="entry name" value="Zip"/>
    <property type="match status" value="2"/>
</dbReference>
<organism>
    <name type="scientific">Escherichia coli O6:H1 (strain CFT073 / ATCC 700928 / UPEC)</name>
    <dbReference type="NCBI Taxonomy" id="199310"/>
    <lineage>
        <taxon>Bacteria</taxon>
        <taxon>Pseudomonadati</taxon>
        <taxon>Pseudomonadota</taxon>
        <taxon>Gammaproteobacteria</taxon>
        <taxon>Enterobacterales</taxon>
        <taxon>Enterobacteriaceae</taxon>
        <taxon>Escherichia</taxon>
    </lineage>
</organism>
<accession>P0A8H4</accession>
<accession>P24198</accession>
<name>ZUPT_ECOL6</name>
<sequence>MSVPLILTILAGAATFIGAFLGVLGQKPSNRLLAFSLGFAAGIMLLISLMEMLPAALAAEGMSPVLGYGMFIFGLLGYFGLDRMLPHAHPQDLMQKSVQPLPKSIKRTAILLTLGISLHNFPEGIATFVTASSNLELGFGIALAVALHNIPEGLAVAGPVYAATGSKRTAILWAGISGLAEILGGVLAWLILGSMISPVVMAAIMAAVAGIMVALSVDELMPLAKEIDPNNNPSYGVLCGMSVMGFSLVLLQTAGIG</sequence>
<gene>
    <name evidence="1" type="primary">zupT</name>
    <name type="ordered locus">c3789</name>
</gene>
<reference key="1">
    <citation type="journal article" date="2002" name="Proc. Natl. Acad. Sci. U.S.A.">
        <title>Extensive mosaic structure revealed by the complete genome sequence of uropathogenic Escherichia coli.</title>
        <authorList>
            <person name="Welch R.A."/>
            <person name="Burland V."/>
            <person name="Plunkett G. III"/>
            <person name="Redford P."/>
            <person name="Roesch P."/>
            <person name="Rasko D."/>
            <person name="Buckles E.L."/>
            <person name="Liou S.-R."/>
            <person name="Boutin A."/>
            <person name="Hackett J."/>
            <person name="Stroud D."/>
            <person name="Mayhew G.F."/>
            <person name="Rose D.J."/>
            <person name="Zhou S."/>
            <person name="Schwartz D.C."/>
            <person name="Perna N.T."/>
            <person name="Mobley H.L.T."/>
            <person name="Donnenberg M.S."/>
            <person name="Blattner F.R."/>
        </authorList>
    </citation>
    <scope>NUCLEOTIDE SEQUENCE [LARGE SCALE GENOMIC DNA]</scope>
    <source>
        <strain>CFT073 / ATCC 700928 / UPEC</strain>
    </source>
</reference>